<dbReference type="EC" id="2.7.7.6"/>
<dbReference type="EMBL" id="AF170726">
    <property type="protein sequence ID" value="AAF14938.1"/>
    <property type="molecule type" value="Genomic_DNA"/>
</dbReference>
<dbReference type="RefSeq" id="NP_051764.1">
    <property type="nucleotide sequence ID" value="NC_001132.2"/>
</dbReference>
<dbReference type="SMR" id="Q9Q8P6"/>
<dbReference type="GeneID" id="932187"/>
<dbReference type="KEGG" id="vg:932187"/>
<dbReference type="Proteomes" id="UP000000867">
    <property type="component" value="Segment"/>
</dbReference>
<dbReference type="GO" id="GO:0000428">
    <property type="term" value="C:DNA-directed RNA polymerase complex"/>
    <property type="evidence" value="ECO:0007669"/>
    <property type="project" value="UniProtKB-KW"/>
</dbReference>
<dbReference type="GO" id="GO:0044423">
    <property type="term" value="C:virion component"/>
    <property type="evidence" value="ECO:0007669"/>
    <property type="project" value="UniProtKB-KW"/>
</dbReference>
<dbReference type="GO" id="GO:0003677">
    <property type="term" value="F:DNA binding"/>
    <property type="evidence" value="ECO:0007669"/>
    <property type="project" value="InterPro"/>
</dbReference>
<dbReference type="GO" id="GO:0003899">
    <property type="term" value="F:DNA-directed RNA polymerase activity"/>
    <property type="evidence" value="ECO:0007669"/>
    <property type="project" value="UniProtKB-EC"/>
</dbReference>
<dbReference type="GO" id="GO:0006351">
    <property type="term" value="P:DNA-templated transcription"/>
    <property type="evidence" value="ECO:0007669"/>
    <property type="project" value="InterPro"/>
</dbReference>
<dbReference type="InterPro" id="IPR008448">
    <property type="entry name" value="RNA_pol_7kDa_chordopoxvir"/>
</dbReference>
<dbReference type="Pfam" id="PF05864">
    <property type="entry name" value="Chordopox_RPO7"/>
    <property type="match status" value="1"/>
</dbReference>
<organism>
    <name type="scientific">Myxoma virus (strain Lausanne)</name>
    <name type="common">MYXV</name>
    <dbReference type="NCBI Taxonomy" id="31530"/>
    <lineage>
        <taxon>Viruses</taxon>
        <taxon>Varidnaviria</taxon>
        <taxon>Bamfordvirae</taxon>
        <taxon>Nucleocytoviricota</taxon>
        <taxon>Pokkesviricetes</taxon>
        <taxon>Chitovirales</taxon>
        <taxon>Poxviridae</taxon>
        <taxon>Chordopoxvirinae</taxon>
        <taxon>Leporipoxvirus</taxon>
        <taxon>Myxoma virus</taxon>
    </lineage>
</organism>
<name>RP07_MYXVL</name>
<sequence>MVFQLVCSTCGRDISEERYALLIKKIDLKTVLRGVKNNCCRLKLSTQIEPQRNLTVEPLLDIN</sequence>
<reference key="1">
    <citation type="journal article" date="1999" name="Virology">
        <title>The complete DNA sequence of myxoma virus.</title>
        <authorList>
            <person name="Cameron C."/>
            <person name="Hota-Mitchell S."/>
            <person name="Chen L."/>
            <person name="Barrett J.W."/>
            <person name="Cao J.-X."/>
            <person name="Macaulay C."/>
            <person name="Willer D.O."/>
            <person name="Evans D.H."/>
            <person name="McFadden G."/>
        </authorList>
    </citation>
    <scope>NUCLEOTIDE SEQUENCE [LARGE SCALE GENOMIC DNA]</scope>
</reference>
<accession>Q9Q8P6</accession>
<proteinExistence type="evidence at transcript level"/>
<evidence type="ECO:0000250" key="1"/>
<evidence type="ECO:0000305" key="2"/>
<comment type="function">
    <text evidence="1">Part of the DNA-dependent RNA polymerase which catalyzes the transcription of viral DNA into RNA using the four ribonucleoside triphosphates as substrates. Responsible for the transcription of early, intermediate and late genes. DNA-dependent RNA polymerase associates with the early transcription factor (ETF) thereby allowing the early genes transcription. Late transcription, and probably also intermediate transcription, require newly synthesized RNA polymerase (By similarity).</text>
</comment>
<comment type="catalytic activity">
    <reaction>
        <text>RNA(n) + a ribonucleoside 5'-triphosphate = RNA(n+1) + diphosphate</text>
        <dbReference type="Rhea" id="RHEA:21248"/>
        <dbReference type="Rhea" id="RHEA-COMP:14527"/>
        <dbReference type="Rhea" id="RHEA-COMP:17342"/>
        <dbReference type="ChEBI" id="CHEBI:33019"/>
        <dbReference type="ChEBI" id="CHEBI:61557"/>
        <dbReference type="ChEBI" id="CHEBI:140395"/>
        <dbReference type="EC" id="2.7.7.6"/>
    </reaction>
</comment>
<comment type="subunit">
    <text evidence="1">The DNA-dependent RNA polymerase used for intermediate and late genes expression consists of eight subunits 147 kDa, 133 kDa, 35 kDa, 30 kDa, 22 kDa, 19 kDa, 18 kDa and 7 kDa totalling more than 500 kDa in mass. The same holoenzyme, with the addition of the transcription-specificity factor RAP94, is used for early gene expression (By similarity).</text>
</comment>
<comment type="subcellular location">
    <subcellularLocation>
        <location evidence="2">Virion</location>
    </subcellularLocation>
    <text evidence="1">All the enzymes and other proteins required to synthesize early mRNAs are packaged within the virion core along with the DNA genome. This is necessary because viral early mRNAs are synthesized within minutes after virus entry into the cell and are extruded through pores in the core particle (By similarity).</text>
</comment>
<comment type="induction">
    <text>Expressed in the early phase of the viral replicative cycle.</text>
</comment>
<comment type="similarity">
    <text evidence="2">Belongs to the poxviridae DNA-directed RNA polymerase 7 kDa subunit family.</text>
</comment>
<keyword id="KW-0240">DNA-directed RNA polymerase</keyword>
<keyword id="KW-0244">Early protein</keyword>
<keyword id="KW-0548">Nucleotidyltransferase</keyword>
<keyword id="KW-1185">Reference proteome</keyword>
<keyword id="KW-0804">Transcription</keyword>
<keyword id="KW-0808">Transferase</keyword>
<keyword id="KW-0946">Virion</keyword>
<protein>
    <recommendedName>
        <fullName>DNA-directed RNA polymerase 7 kDa subunit</fullName>
        <ecNumber>2.7.7.6</ecNumber>
    </recommendedName>
</protein>
<feature type="chain" id="PRO_0000099162" description="DNA-directed RNA polymerase 7 kDa subunit">
    <location>
        <begin position="1"/>
        <end position="63"/>
    </location>
</feature>
<gene>
    <name type="primary">RPO7</name>
    <name type="ordered locus">m050R</name>
</gene>
<organismHost>
    <name type="scientific">Oryctolagus cuniculus</name>
    <name type="common">Rabbit</name>
    <dbReference type="NCBI Taxonomy" id="9986"/>
</organismHost>